<evidence type="ECO:0000250" key="1">
    <source>
        <dbReference type="UniProtKB" id="O75534"/>
    </source>
</evidence>
<evidence type="ECO:0000255" key="2">
    <source>
        <dbReference type="PROSITE-ProRule" id="PRU01287"/>
    </source>
</evidence>
<evidence type="ECO:0000305" key="3"/>
<evidence type="ECO:0000312" key="4">
    <source>
        <dbReference type="RGD" id="619726"/>
    </source>
</evidence>
<feature type="chain" id="PRO_0000100350" description="Cold shock domain-containing protein E1">
    <location>
        <begin position="1"/>
        <end position="798"/>
    </location>
</feature>
<feature type="domain" description="CSD 1">
    <location>
        <begin position="26"/>
        <end position="87"/>
    </location>
</feature>
<feature type="domain" description="CSD 2; truncated">
    <location>
        <begin position="136"/>
        <end position="179"/>
    </location>
</feature>
<feature type="domain" description="CSD 3">
    <location>
        <begin position="186"/>
        <end position="245"/>
    </location>
</feature>
<feature type="domain" description="CSD 4; truncated">
    <location>
        <begin position="297"/>
        <end position="337"/>
    </location>
</feature>
<feature type="domain" description="CSD 5">
    <location>
        <begin position="349"/>
        <end position="410"/>
    </location>
</feature>
<feature type="domain" description="CSD 6">
    <location>
        <begin position="447"/>
        <end position="507"/>
    </location>
</feature>
<feature type="domain" description="CSD 7">
    <location>
        <begin position="519"/>
        <end position="579"/>
    </location>
</feature>
<feature type="domain" description="CSD 8">
    <location>
        <begin position="610"/>
        <end position="670"/>
    </location>
</feature>
<feature type="domain" description="CSD 9">
    <location>
        <begin position="674"/>
        <end position="735"/>
    </location>
</feature>
<feature type="domain" description="SUZ-C" evidence="2">
    <location>
        <begin position="748"/>
        <end position="789"/>
    </location>
</feature>
<feature type="modified residue" description="N6-acetyllysine" evidence="1">
    <location>
        <position position="81"/>
    </location>
</feature>
<feature type="modified residue" description="Phosphoserine" evidence="1">
    <location>
        <position position="123"/>
    </location>
</feature>
<feature type="modified residue" description="Phosphoserine" evidence="1">
    <location>
        <position position="276"/>
    </location>
</feature>
<feature type="modified residue" description="Phosphoserine" evidence="1">
    <location>
        <position position="514"/>
    </location>
</feature>
<feature type="modified residue" description="Phosphoserine" evidence="1">
    <location>
        <position position="584"/>
    </location>
</feature>
<feature type="modified residue" description="Phosphothreonine" evidence="1">
    <location>
        <position position="761"/>
    </location>
</feature>
<feature type="cross-link" description="Glycyl lysine isopeptide (Lys-Gly) (interchain with G-Cter in SUMO2)" evidence="1">
    <location>
        <position position="91"/>
    </location>
</feature>
<accession>P18395</accession>
<organism>
    <name type="scientific">Rattus norvegicus</name>
    <name type="common">Rat</name>
    <dbReference type="NCBI Taxonomy" id="10116"/>
    <lineage>
        <taxon>Eukaryota</taxon>
        <taxon>Metazoa</taxon>
        <taxon>Chordata</taxon>
        <taxon>Craniata</taxon>
        <taxon>Vertebrata</taxon>
        <taxon>Euteleostomi</taxon>
        <taxon>Mammalia</taxon>
        <taxon>Eutheria</taxon>
        <taxon>Euarchontoglires</taxon>
        <taxon>Glires</taxon>
        <taxon>Rodentia</taxon>
        <taxon>Myomorpha</taxon>
        <taxon>Muroidea</taxon>
        <taxon>Muridae</taxon>
        <taxon>Murinae</taxon>
        <taxon>Rattus</taxon>
    </lineage>
</organism>
<comment type="function">
    <text evidence="1">RNA-binding protein involved in translationally coupled mRNA turnover. Implicated with other RNA-binding proteins in the cytoplasmic deadenylation/translational and decay interplay of the FOS mRNA mediated by the major coding-region determinant of instability (mCRD) domain. Required for efficient formation of stress granules.</text>
</comment>
<comment type="subunit">
    <text evidence="1">Component of a multi subunit autoregulatory ribonucleoprotein complex (ARC), at least composed of IGF2BP1, PABPC1 and CSDE1. Interacts with STRAP. Part of a complex associated with the FOS mCRD domain and consisting of PABPC1, PAIP1, HNRPD and SYNCRIP. The interaction with PABPC1 is direct and RNA-independent. Interacts with EIF4ENIF1/4E-T.</text>
</comment>
<comment type="subcellular location">
    <subcellularLocation>
        <location evidence="1">Cytoplasm</location>
    </subcellularLocation>
    <subcellularLocation>
        <location evidence="1">Cytoplasm</location>
        <location evidence="1">Stress granule</location>
    </subcellularLocation>
    <subcellularLocation>
        <location evidence="1">Cytoplasm</location>
        <location evidence="1">P-body</location>
    </subcellularLocation>
</comment>
<comment type="similarity">
    <text evidence="3">Belongs to the UNR family.</text>
</comment>
<proteinExistence type="evidence at transcript level"/>
<sequence length="798" mass="88895">MSFDPNLLHNNGHNGYPNGTSAALRETGVIEKLLTSYGFIQCSERQARLFFHCSQYNGNLQDLKVGDDVEFEVSSDRRTGKPIAIKLVKIKPEIHPEERMNGQVVCAVPHNLESKSPAAPGQSPTGSVCYERNGEVFYLTYTSEDVEGNVQLETGDKINFVIDNNKHTGAVSARNIMLLKKKQARYQGVVCAMKEAFGFIERGDVVKEIFFHYSEFKGDLETLQPGDDVEFTIKDRNGKEVATDVRLLPQGTVIFEDISIEHFEGTVTKVIPKVPSKNQNDPLPGRIKVDFVIPKELPFGDKDTKSKVTLLEGDHVRFNISTDRRDKLERATNIEVLSNTFQFTNEAREMGVIAAMRDGFGFIKCVDRDARMFFHFSEILDGNQLHIADEVEFTVVPDMLSAQRNHAIRIKKLPKGTVSFHSHSDHRFLGTVEKEATFSNPKTTSPNKGKDKEAEDGIIAYDDCGVKLTIAFQAKDVEGSTSPQIGDKVEFSISDKQRPGQQIATCVRLLGRNSNSKRLLGYVATLKDNFGFIETANHDKEIFFHYSEFSGDVDSLELGDMVEYSLSKGKGNKVSAEKVNKTHSVNGITEEANPTIYSGKVIRPLRGVDPTQIEYQGMIEIVEEGDMKGEVYPFGIVGMANKGDCLQKGESVKFQLCVLGQNAQTMAYNITPLRRATVECVKDQFGFINYEVGDSKKLFFHVKEVQDGIELQAGDEVEFSVILNQRTGKCSACNVWRVCEGPKAVAAPRPDRLVNRLKNITLDDASAPRLMVLRQPRGPDNSMGFGAERKIRQAGVID</sequence>
<reference key="1">
    <citation type="journal article" date="1990" name="Nucleic Acids Res.">
        <title>Characterization of unr; a gene closely linked to N-ras.</title>
        <authorList>
            <person name="Jeffers M."/>
            <person name="Paciucci R."/>
            <person name="Pellicer A."/>
        </authorList>
    </citation>
    <scope>NUCLEOTIDE SEQUENCE [MRNA]</scope>
    <source>
        <tissue>Testis</tissue>
    </source>
</reference>
<keyword id="KW-0007">Acetylation</keyword>
<keyword id="KW-0963">Cytoplasm</keyword>
<keyword id="KW-1017">Isopeptide bond</keyword>
<keyword id="KW-0597">Phosphoprotein</keyword>
<keyword id="KW-1185">Reference proteome</keyword>
<keyword id="KW-0677">Repeat</keyword>
<keyword id="KW-0694">RNA-binding</keyword>
<keyword id="KW-0832">Ubl conjugation</keyword>
<dbReference type="EMBL" id="X52311">
    <property type="protein sequence ID" value="CAA36549.1"/>
    <property type="molecule type" value="mRNA"/>
</dbReference>
<dbReference type="PIR" id="S11210">
    <property type="entry name" value="S11210"/>
</dbReference>
<dbReference type="RefSeq" id="NP_446458.1">
    <property type="nucleotide sequence ID" value="NM_054006.3"/>
</dbReference>
<dbReference type="RefSeq" id="XP_003751901.1">
    <property type="nucleotide sequence ID" value="XM_003751853.4"/>
</dbReference>
<dbReference type="RefSeq" id="XP_038957519.1">
    <property type="nucleotide sequence ID" value="XM_039101591.2"/>
</dbReference>
<dbReference type="RefSeq" id="XP_063137248.1">
    <property type="nucleotide sequence ID" value="XM_063281178.1"/>
</dbReference>
<dbReference type="SMR" id="P18395"/>
<dbReference type="BioGRID" id="250685">
    <property type="interactions" value="2"/>
</dbReference>
<dbReference type="FunCoup" id="P18395">
    <property type="interactions" value="3717"/>
</dbReference>
<dbReference type="STRING" id="10116.ENSRNOP00000069264"/>
<dbReference type="iPTMnet" id="P18395"/>
<dbReference type="PhosphoSitePlus" id="P18395"/>
<dbReference type="jPOST" id="P18395"/>
<dbReference type="PaxDb" id="10116-ENSRNOP00000051275"/>
<dbReference type="GeneID" id="117180"/>
<dbReference type="KEGG" id="rno:100364335"/>
<dbReference type="KEGG" id="rno:117180"/>
<dbReference type="AGR" id="RGD:2321223"/>
<dbReference type="AGR" id="RGD:619726"/>
<dbReference type="CTD" id="7812"/>
<dbReference type="RGD" id="619726">
    <property type="gene designation" value="Csde1"/>
</dbReference>
<dbReference type="VEuPathDB" id="HostDB:ENSRNOG00000061058"/>
<dbReference type="eggNOG" id="ENOG502QSJ1">
    <property type="taxonomic scope" value="Eukaryota"/>
</dbReference>
<dbReference type="HOGENOM" id="CLU_012335_1_0_1"/>
<dbReference type="InParanoid" id="P18395"/>
<dbReference type="PhylomeDB" id="P18395"/>
<dbReference type="PRO" id="PR:P18395"/>
<dbReference type="Proteomes" id="UP000002494">
    <property type="component" value="Chromosome 2"/>
</dbReference>
<dbReference type="Bgee" id="ENSRNOG00000061058">
    <property type="expression patterns" value="Expressed in quadriceps femoris and 20 other cell types or tissues"/>
</dbReference>
<dbReference type="GO" id="GO:0070937">
    <property type="term" value="C:CRD-mediated mRNA stability complex"/>
    <property type="evidence" value="ECO:0000266"/>
    <property type="project" value="RGD"/>
</dbReference>
<dbReference type="GO" id="GO:0010494">
    <property type="term" value="C:cytoplasmic stress granule"/>
    <property type="evidence" value="ECO:0007669"/>
    <property type="project" value="UniProtKB-SubCell"/>
</dbReference>
<dbReference type="GO" id="GO:0005829">
    <property type="term" value="C:cytosol"/>
    <property type="evidence" value="ECO:0000266"/>
    <property type="project" value="RGD"/>
</dbReference>
<dbReference type="GO" id="GO:0106002">
    <property type="term" value="C:mCRD-mediated mRNA stability complex"/>
    <property type="evidence" value="ECO:0000266"/>
    <property type="project" value="RGD"/>
</dbReference>
<dbReference type="GO" id="GO:0000932">
    <property type="term" value="C:P-body"/>
    <property type="evidence" value="ECO:0007669"/>
    <property type="project" value="UniProtKB-SubCell"/>
</dbReference>
<dbReference type="GO" id="GO:0106222">
    <property type="term" value="F:lncRNA binding"/>
    <property type="evidence" value="ECO:0000266"/>
    <property type="project" value="RGD"/>
</dbReference>
<dbReference type="GO" id="GO:1905172">
    <property type="term" value="F:RISC complex binding"/>
    <property type="evidence" value="ECO:0000266"/>
    <property type="project" value="RGD"/>
</dbReference>
<dbReference type="GO" id="GO:0035613">
    <property type="term" value="F:RNA stem-loop binding"/>
    <property type="evidence" value="ECO:0000266"/>
    <property type="project" value="RGD"/>
</dbReference>
<dbReference type="GO" id="GO:0070934">
    <property type="term" value="P:CRD-mediated mRNA stabilization"/>
    <property type="evidence" value="ECO:0000266"/>
    <property type="project" value="RGD"/>
</dbReference>
<dbReference type="GO" id="GO:0075522">
    <property type="term" value="P:IRES-dependent viral translational initiation"/>
    <property type="evidence" value="ECO:0000266"/>
    <property type="project" value="RGD"/>
</dbReference>
<dbReference type="GO" id="GO:1900152">
    <property type="term" value="P:negative regulation of nuclear-transcribed mRNA catabolic process, deadenylation-dependent decay"/>
    <property type="evidence" value="ECO:0000266"/>
    <property type="project" value="RGD"/>
</dbReference>
<dbReference type="GO" id="GO:0070966">
    <property type="term" value="P:nuclear-transcribed mRNA catabolic process, no-go decay"/>
    <property type="evidence" value="ECO:0000266"/>
    <property type="project" value="RGD"/>
</dbReference>
<dbReference type="GO" id="GO:2000767">
    <property type="term" value="P:positive regulation of cytoplasmic translation"/>
    <property type="evidence" value="ECO:0000266"/>
    <property type="project" value="RGD"/>
</dbReference>
<dbReference type="GO" id="GO:0045727">
    <property type="term" value="P:positive regulation of translation"/>
    <property type="evidence" value="ECO:0000266"/>
    <property type="project" value="RGD"/>
</dbReference>
<dbReference type="GO" id="GO:0034063">
    <property type="term" value="P:stress granule assembly"/>
    <property type="evidence" value="ECO:0000250"/>
    <property type="project" value="UniProtKB"/>
</dbReference>
<dbReference type="CDD" id="cd04458">
    <property type="entry name" value="CSP_CDS"/>
    <property type="match status" value="2"/>
</dbReference>
<dbReference type="FunFam" id="2.40.50.140:FF:000055">
    <property type="entry name" value="Cold shock domain containing E1, RNA-binding"/>
    <property type="match status" value="1"/>
</dbReference>
<dbReference type="FunFam" id="2.40.50.140:FF:000088">
    <property type="entry name" value="cold shock domain-containing protein E1 isoform X1"/>
    <property type="match status" value="1"/>
</dbReference>
<dbReference type="FunFam" id="2.40.50.140:FF:000093">
    <property type="entry name" value="cold shock domain-containing protein E1 isoform X1"/>
    <property type="match status" value="1"/>
</dbReference>
<dbReference type="FunFam" id="2.40.50.140:FF:000094">
    <property type="entry name" value="cold shock domain-containing protein E1 isoform X1"/>
    <property type="match status" value="1"/>
</dbReference>
<dbReference type="FunFam" id="2.40.50.140:FF:000133">
    <property type="entry name" value="cold shock domain-containing protein E1 isoform X1"/>
    <property type="match status" value="1"/>
</dbReference>
<dbReference type="Gene3D" id="2.40.50.140">
    <property type="entry name" value="Nucleic acid-binding proteins"/>
    <property type="match status" value="6"/>
</dbReference>
<dbReference type="InterPro" id="IPR011129">
    <property type="entry name" value="CSD"/>
</dbReference>
<dbReference type="InterPro" id="IPR019844">
    <property type="entry name" value="CSD_CS"/>
</dbReference>
<dbReference type="InterPro" id="IPR056400">
    <property type="entry name" value="CSDE1"/>
</dbReference>
<dbReference type="InterPro" id="IPR002059">
    <property type="entry name" value="CSP_DNA-bd"/>
</dbReference>
<dbReference type="InterPro" id="IPR012340">
    <property type="entry name" value="NA-bd_OB-fold"/>
</dbReference>
<dbReference type="InterPro" id="IPR024642">
    <property type="entry name" value="SUZ-C"/>
</dbReference>
<dbReference type="PANTHER" id="PTHR12913:SF1">
    <property type="entry name" value="COLD SHOCK DOMAIN-CONTAINING PROTEIN E1"/>
    <property type="match status" value="1"/>
</dbReference>
<dbReference type="PANTHER" id="PTHR12913">
    <property type="entry name" value="UNR PROTEIN N-RAS UPSTREAM GENE PROTEIN"/>
    <property type="match status" value="1"/>
</dbReference>
<dbReference type="Pfam" id="PF00313">
    <property type="entry name" value="CSD"/>
    <property type="match status" value="5"/>
</dbReference>
<dbReference type="Pfam" id="PF23456">
    <property type="entry name" value="CSDE1"/>
    <property type="match status" value="4"/>
</dbReference>
<dbReference type="Pfam" id="PF12901">
    <property type="entry name" value="SUZ-C"/>
    <property type="match status" value="1"/>
</dbReference>
<dbReference type="SMART" id="SM00357">
    <property type="entry name" value="CSP"/>
    <property type="match status" value="5"/>
</dbReference>
<dbReference type="SUPFAM" id="SSF50249">
    <property type="entry name" value="Nucleic acid-binding proteins"/>
    <property type="match status" value="5"/>
</dbReference>
<dbReference type="PROSITE" id="PS00352">
    <property type="entry name" value="CSD_1"/>
    <property type="match status" value="4"/>
</dbReference>
<dbReference type="PROSITE" id="PS51857">
    <property type="entry name" value="CSD_2"/>
    <property type="match status" value="9"/>
</dbReference>
<dbReference type="PROSITE" id="PS51938">
    <property type="entry name" value="SUZ_C"/>
    <property type="match status" value="1"/>
</dbReference>
<name>CSDE1_RAT</name>
<protein>
    <recommendedName>
        <fullName evidence="3">Cold shock domain-containing protein E1</fullName>
    </recommendedName>
    <alternativeName>
        <fullName>Protein UNR</fullName>
    </alternativeName>
</protein>
<gene>
    <name evidence="4" type="primary">Csde1</name>
    <name type="synonym">Unr</name>
</gene>